<evidence type="ECO:0000255" key="1">
    <source>
        <dbReference type="HAMAP-Rule" id="MF_03113"/>
    </source>
</evidence>
<sequence>MPSLLITILLLNIVIYVINTIGAATIDSLLWLFYIKLPTGTSHMAREQRRLKREVIQLKREMNATSSQDEFAKWAKLRRRHDKALETYEAKNNELTQCKSSFDMTVKSVRWAATSGLMLFLQFWYSKRPIFTLPPGWIPWQVQWVLSFPRAPMGTVSIQIWGGACATVVALVGDAVGATMGFVSASKKEGMKVGAGVGEKEGKKSQ</sequence>
<reference key="1">
    <citation type="journal article" date="2015" name="PLoS Genet.">
        <title>The dynamic genome and transcriptome of the human fungal pathogen Blastomyces and close relative Emmonsia.</title>
        <authorList>
            <person name="Munoz J.F."/>
            <person name="Gauthier G.M."/>
            <person name="Desjardins C.A."/>
            <person name="Gallo J.E."/>
            <person name="Holder J."/>
            <person name="Sullivan T.D."/>
            <person name="Marty A.J."/>
            <person name="Carmen J.C."/>
            <person name="Chen Z."/>
            <person name="Ding L."/>
            <person name="Gujja S."/>
            <person name="Magrini V."/>
            <person name="Misas E."/>
            <person name="Mitreva M."/>
            <person name="Priest M."/>
            <person name="Saif S."/>
            <person name="Whiston E.A."/>
            <person name="Young S."/>
            <person name="Zeng Q."/>
            <person name="Goldman W.E."/>
            <person name="Mardis E.R."/>
            <person name="Taylor J.W."/>
            <person name="McEwen J.G."/>
            <person name="Clay O.K."/>
            <person name="Klein B.S."/>
            <person name="Cuomo C.A."/>
        </authorList>
    </citation>
    <scope>NUCLEOTIDE SEQUENCE [LARGE SCALE GENOMIC DNA]</scope>
    <source>
        <strain>SLH14081</strain>
    </source>
</reference>
<dbReference type="EMBL" id="GG657462">
    <property type="protein sequence ID" value="OAT11255.1"/>
    <property type="molecule type" value="Genomic_DNA"/>
</dbReference>
<dbReference type="RefSeq" id="XP_002623016.1">
    <property type="nucleotide sequence ID" value="XM_002622970.1"/>
</dbReference>
<dbReference type="SMR" id="C5JW43"/>
<dbReference type="STRING" id="559298.C5JW43"/>
<dbReference type="GeneID" id="8502989"/>
<dbReference type="KEGG" id="bgh:BDBG_06196"/>
<dbReference type="VEuPathDB" id="FungiDB:BDBG_06196"/>
<dbReference type="HOGENOM" id="CLU_089418_1_0_1"/>
<dbReference type="OrthoDB" id="69461at2759"/>
<dbReference type="Proteomes" id="UP000002038">
    <property type="component" value="Unassembled WGS sequence"/>
</dbReference>
<dbReference type="GO" id="GO:0005789">
    <property type="term" value="C:endoplasmic reticulum membrane"/>
    <property type="evidence" value="ECO:0007669"/>
    <property type="project" value="UniProtKB-SubCell"/>
</dbReference>
<dbReference type="GO" id="GO:0043529">
    <property type="term" value="C:GET complex"/>
    <property type="evidence" value="ECO:0007669"/>
    <property type="project" value="InterPro"/>
</dbReference>
<dbReference type="GO" id="GO:0043495">
    <property type="term" value="F:protein-membrane adaptor activity"/>
    <property type="evidence" value="ECO:0007669"/>
    <property type="project" value="TreeGrafter"/>
</dbReference>
<dbReference type="GO" id="GO:0071816">
    <property type="term" value="P:tail-anchored membrane protein insertion into ER membrane"/>
    <property type="evidence" value="ECO:0007669"/>
    <property type="project" value="InterPro"/>
</dbReference>
<dbReference type="FunFam" id="1.10.287.660:FF:000006">
    <property type="entry name" value="Protein GET1"/>
    <property type="match status" value="1"/>
</dbReference>
<dbReference type="Gene3D" id="1.10.287.660">
    <property type="entry name" value="Helix hairpin bin"/>
    <property type="match status" value="1"/>
</dbReference>
<dbReference type="HAMAP" id="MF_03113">
    <property type="entry name" value="Get1"/>
    <property type="match status" value="1"/>
</dbReference>
<dbReference type="InterPro" id="IPR028945">
    <property type="entry name" value="Get1"/>
</dbReference>
<dbReference type="InterPro" id="IPR027538">
    <property type="entry name" value="Get1_fungi"/>
</dbReference>
<dbReference type="InterPro" id="IPR029012">
    <property type="entry name" value="Helix_hairpin_bin_sf"/>
</dbReference>
<dbReference type="PANTHER" id="PTHR42650:SF1">
    <property type="entry name" value="GUIDED ENTRY OF TAIL-ANCHORED PROTEINS FACTOR 1"/>
    <property type="match status" value="1"/>
</dbReference>
<dbReference type="PANTHER" id="PTHR42650">
    <property type="entry name" value="TAIL-ANCHORED PROTEIN INSERTION RECEPTOR WRB"/>
    <property type="match status" value="1"/>
</dbReference>
<dbReference type="Pfam" id="PF04420">
    <property type="entry name" value="CHD5"/>
    <property type="match status" value="1"/>
</dbReference>
<keyword id="KW-0175">Coiled coil</keyword>
<keyword id="KW-0256">Endoplasmic reticulum</keyword>
<keyword id="KW-0472">Membrane</keyword>
<keyword id="KW-1185">Reference proteome</keyword>
<keyword id="KW-0812">Transmembrane</keyword>
<keyword id="KW-1133">Transmembrane helix</keyword>
<keyword id="KW-0813">Transport</keyword>
<feature type="chain" id="PRO_0000388573" description="Protein GET1">
    <location>
        <begin position="1"/>
        <end position="206"/>
    </location>
</feature>
<feature type="topological domain" description="Lumenal" evidence="1">
    <location>
        <begin position="1"/>
        <end position="4"/>
    </location>
</feature>
<feature type="transmembrane region" description="Helical" evidence="1">
    <location>
        <begin position="5"/>
        <end position="24"/>
    </location>
</feature>
<feature type="topological domain" description="Cytoplasmic" evidence="1">
    <location>
        <begin position="25"/>
        <end position="110"/>
    </location>
</feature>
<feature type="transmembrane region" description="Helical" evidence="1">
    <location>
        <begin position="111"/>
        <end position="131"/>
    </location>
</feature>
<feature type="topological domain" description="Lumenal" evidence="1">
    <location>
        <begin position="132"/>
        <end position="155"/>
    </location>
</feature>
<feature type="transmembrane region" description="Helical" evidence="1">
    <location>
        <begin position="156"/>
        <end position="172"/>
    </location>
</feature>
<feature type="topological domain" description="Cytoplasmic" evidence="1">
    <location>
        <begin position="173"/>
        <end position="206"/>
    </location>
</feature>
<feature type="coiled-coil region" evidence="1">
    <location>
        <begin position="42"/>
        <end position="99"/>
    </location>
</feature>
<comment type="function">
    <text evidence="1">Required for the post-translational delivery of tail-anchored (TA) proteins to the endoplasmic reticulum. Acts as a membrane receptor for soluble GET3, which recognizes and selectively binds the transmembrane domain of TA proteins in the cytosol.</text>
</comment>
<comment type="subunit">
    <text evidence="1">Interacts with GET3.</text>
</comment>
<comment type="subcellular location">
    <subcellularLocation>
        <location evidence="1">Endoplasmic reticulum membrane</location>
        <topology evidence="1">Multi-pass membrane protein</topology>
    </subcellularLocation>
</comment>
<comment type="similarity">
    <text evidence="1">Belongs to the WRB/GET1 family.</text>
</comment>
<organism>
    <name type="scientific">Blastomyces gilchristii (strain SLH14081)</name>
    <name type="common">Blastomyces dermatitidis</name>
    <dbReference type="NCBI Taxonomy" id="559298"/>
    <lineage>
        <taxon>Eukaryota</taxon>
        <taxon>Fungi</taxon>
        <taxon>Dikarya</taxon>
        <taxon>Ascomycota</taxon>
        <taxon>Pezizomycotina</taxon>
        <taxon>Eurotiomycetes</taxon>
        <taxon>Eurotiomycetidae</taxon>
        <taxon>Onygenales</taxon>
        <taxon>Ajellomycetaceae</taxon>
        <taxon>Blastomyces</taxon>
    </lineage>
</organism>
<proteinExistence type="inferred from homology"/>
<accession>C5JW43</accession>
<accession>A0A179UT11</accession>
<protein>
    <recommendedName>
        <fullName evidence="1">Protein GET1</fullName>
    </recommendedName>
    <alternativeName>
        <fullName evidence="1">Guided entry of tail-anchored proteins 1</fullName>
    </alternativeName>
</protein>
<name>GET1_BLAGS</name>
<gene>
    <name evidence="1" type="primary">GET1</name>
    <name type="ORF">BDBG_06196</name>
</gene>